<feature type="chain" id="PRO_0000177258" description="Large ribosomal subunit protein bL20">
    <location>
        <begin position="1"/>
        <end position="117"/>
    </location>
</feature>
<feature type="sequence conflict" description="In Ref. 1 and 2." evidence="2" ref="1 2">
    <original>S</original>
    <variation>P</variation>
    <location>
        <position position="29"/>
    </location>
</feature>
<dbReference type="EMBL" id="AF055586">
    <property type="protein sequence ID" value="AAC38423.1"/>
    <property type="molecule type" value="Genomic_DNA"/>
</dbReference>
<dbReference type="EMBL" id="AF179591">
    <property type="protein sequence ID" value="AAD53322.1"/>
    <property type="molecule type" value="Genomic_DNA"/>
</dbReference>
<dbReference type="EMBL" id="AE003853">
    <property type="protein sequence ID" value="AAF96198.1"/>
    <property type="molecule type" value="Genomic_DNA"/>
</dbReference>
<dbReference type="PIR" id="B82476">
    <property type="entry name" value="B82476"/>
</dbReference>
<dbReference type="RefSeq" id="NP_232686.1">
    <property type="nucleotide sequence ID" value="NC_002506.1"/>
</dbReference>
<dbReference type="RefSeq" id="WP_001138366.1">
    <property type="nucleotide sequence ID" value="NZ_LT906615.1"/>
</dbReference>
<dbReference type="SMR" id="P0A479"/>
<dbReference type="STRING" id="243277.VC_A0290"/>
<dbReference type="DNASU" id="2611990"/>
<dbReference type="EnsemblBacteria" id="AAF96198">
    <property type="protein sequence ID" value="AAF96198"/>
    <property type="gene ID" value="VC_A0290"/>
</dbReference>
<dbReference type="GeneID" id="93954679"/>
<dbReference type="KEGG" id="vch:VC_A0290"/>
<dbReference type="PATRIC" id="fig|243277.26.peg.2925"/>
<dbReference type="eggNOG" id="COG0292">
    <property type="taxonomic scope" value="Bacteria"/>
</dbReference>
<dbReference type="HOGENOM" id="CLU_123265_0_1_6"/>
<dbReference type="Proteomes" id="UP000000584">
    <property type="component" value="Chromosome 2"/>
</dbReference>
<dbReference type="GO" id="GO:0022625">
    <property type="term" value="C:cytosolic large ribosomal subunit"/>
    <property type="evidence" value="ECO:0000318"/>
    <property type="project" value="GO_Central"/>
</dbReference>
<dbReference type="GO" id="GO:0019843">
    <property type="term" value="F:rRNA binding"/>
    <property type="evidence" value="ECO:0007669"/>
    <property type="project" value="UniProtKB-UniRule"/>
</dbReference>
<dbReference type="GO" id="GO:0003735">
    <property type="term" value="F:structural constituent of ribosome"/>
    <property type="evidence" value="ECO:0000318"/>
    <property type="project" value="GO_Central"/>
</dbReference>
<dbReference type="GO" id="GO:0000027">
    <property type="term" value="P:ribosomal large subunit assembly"/>
    <property type="evidence" value="ECO:0007669"/>
    <property type="project" value="UniProtKB-UniRule"/>
</dbReference>
<dbReference type="GO" id="GO:0006412">
    <property type="term" value="P:translation"/>
    <property type="evidence" value="ECO:0007669"/>
    <property type="project" value="InterPro"/>
</dbReference>
<dbReference type="CDD" id="cd07026">
    <property type="entry name" value="Ribosomal_L20"/>
    <property type="match status" value="1"/>
</dbReference>
<dbReference type="FunFam" id="1.10.1900.20:FF:000001">
    <property type="entry name" value="50S ribosomal protein L20"/>
    <property type="match status" value="1"/>
</dbReference>
<dbReference type="Gene3D" id="6.10.160.10">
    <property type="match status" value="1"/>
</dbReference>
<dbReference type="Gene3D" id="1.10.1900.20">
    <property type="entry name" value="Ribosomal protein L20"/>
    <property type="match status" value="1"/>
</dbReference>
<dbReference type="HAMAP" id="MF_00382">
    <property type="entry name" value="Ribosomal_bL20"/>
    <property type="match status" value="1"/>
</dbReference>
<dbReference type="InterPro" id="IPR005813">
    <property type="entry name" value="Ribosomal_bL20"/>
</dbReference>
<dbReference type="InterPro" id="IPR049946">
    <property type="entry name" value="RIBOSOMAL_L20_CS"/>
</dbReference>
<dbReference type="InterPro" id="IPR035566">
    <property type="entry name" value="Ribosomal_protein_bL20_C"/>
</dbReference>
<dbReference type="NCBIfam" id="TIGR01032">
    <property type="entry name" value="rplT_bact"/>
    <property type="match status" value="1"/>
</dbReference>
<dbReference type="PANTHER" id="PTHR10986">
    <property type="entry name" value="39S RIBOSOMAL PROTEIN L20"/>
    <property type="match status" value="1"/>
</dbReference>
<dbReference type="Pfam" id="PF00453">
    <property type="entry name" value="Ribosomal_L20"/>
    <property type="match status" value="1"/>
</dbReference>
<dbReference type="PRINTS" id="PR00062">
    <property type="entry name" value="RIBOSOMALL20"/>
</dbReference>
<dbReference type="SUPFAM" id="SSF74731">
    <property type="entry name" value="Ribosomal protein L20"/>
    <property type="match status" value="1"/>
</dbReference>
<dbReference type="PROSITE" id="PS00937">
    <property type="entry name" value="RIBOSOMAL_L20"/>
    <property type="match status" value="1"/>
</dbReference>
<organism>
    <name type="scientific">Vibrio cholerae serotype O1 (strain ATCC 39315 / El Tor Inaba N16961)</name>
    <dbReference type="NCBI Taxonomy" id="243277"/>
    <lineage>
        <taxon>Bacteria</taxon>
        <taxon>Pseudomonadati</taxon>
        <taxon>Pseudomonadota</taxon>
        <taxon>Gammaproteobacteria</taxon>
        <taxon>Vibrionales</taxon>
        <taxon>Vibrionaceae</taxon>
        <taxon>Vibrio</taxon>
    </lineage>
</organism>
<gene>
    <name type="primary">rplT</name>
    <name type="ordered locus">VC_A0290</name>
</gene>
<sequence length="117" mass="13366">MPRVKRGVQARARHKKVLKQAKGYYGARSRVYRVAFQAVIKAGQYAYRDRRAKKRQFRQLWIARINAAARQNGLSYSRFINGLKKASIEIDRKILADIAVFDKAAFAVLVEKAKGAL</sequence>
<keyword id="KW-1185">Reference proteome</keyword>
<keyword id="KW-0687">Ribonucleoprotein</keyword>
<keyword id="KW-0689">Ribosomal protein</keyword>
<keyword id="KW-0694">RNA-binding</keyword>
<keyword id="KW-0699">rRNA-binding</keyword>
<comment type="function">
    <text evidence="1">Binds directly to 23S ribosomal RNA and is necessary for the in vitro assembly process of the 50S ribosomal subunit. It is not involved in the protein synthesizing functions of that subunit (By similarity).</text>
</comment>
<comment type="similarity">
    <text evidence="2">Belongs to the bacterial ribosomal protein bL20 family.</text>
</comment>
<protein>
    <recommendedName>
        <fullName evidence="2">Large ribosomal subunit protein bL20</fullName>
    </recommendedName>
    <alternativeName>
        <fullName>50S ribosomal protein L20</fullName>
    </alternativeName>
</protein>
<reference key="1">
    <citation type="journal article" date="1998" name="Science">
        <title>A distinctive class of integron in the Vibrio cholerae genome.</title>
        <authorList>
            <person name="Mazel D."/>
            <person name="Dychinco B."/>
            <person name="Webb V.A."/>
            <person name="Davies J."/>
        </authorList>
    </citation>
    <scope>NUCLEOTIDE SEQUENCE [GENOMIC DNA]</scope>
</reference>
<reference key="2">
    <citation type="submission" date="1999-08" db="EMBL/GenBank/DDBJ databases">
        <title>The Vibrio cholerea mega-integron.</title>
        <authorList>
            <person name="Clark C.A."/>
            <person name="Manning P.A."/>
        </authorList>
    </citation>
    <scope>NUCLEOTIDE SEQUENCE [GENOMIC DNA]</scope>
</reference>
<reference key="3">
    <citation type="journal article" date="2000" name="Nature">
        <title>DNA sequence of both chromosomes of the cholera pathogen Vibrio cholerae.</title>
        <authorList>
            <person name="Heidelberg J.F."/>
            <person name="Eisen J.A."/>
            <person name="Nelson W.C."/>
            <person name="Clayton R.A."/>
            <person name="Gwinn M.L."/>
            <person name="Dodson R.J."/>
            <person name="Haft D.H."/>
            <person name="Hickey E.K."/>
            <person name="Peterson J.D."/>
            <person name="Umayam L.A."/>
            <person name="Gill S.R."/>
            <person name="Nelson K.E."/>
            <person name="Read T.D."/>
            <person name="Tettelin H."/>
            <person name="Richardson D.L."/>
            <person name="Ermolaeva M.D."/>
            <person name="Vamathevan J.J."/>
            <person name="Bass S."/>
            <person name="Qin H."/>
            <person name="Dragoi I."/>
            <person name="Sellers P."/>
            <person name="McDonald L.A."/>
            <person name="Utterback T.R."/>
            <person name="Fleischmann R.D."/>
            <person name="Nierman W.C."/>
            <person name="White O."/>
            <person name="Salzberg S.L."/>
            <person name="Smith H.O."/>
            <person name="Colwell R.R."/>
            <person name="Mekalanos J.J."/>
            <person name="Venter J.C."/>
            <person name="Fraser C.M."/>
        </authorList>
    </citation>
    <scope>NUCLEOTIDE SEQUENCE [LARGE SCALE GENOMIC DNA]</scope>
    <source>
        <strain>ATCC 39315 / El Tor Inaba N16961</strain>
    </source>
</reference>
<proteinExistence type="inferred from homology"/>
<name>RL20_VIBCH</name>
<accession>P0A479</accession>
<accession>O68846</accession>
<accession>Q9KMN6</accession>
<evidence type="ECO:0000250" key="1"/>
<evidence type="ECO:0000305" key="2"/>